<keyword id="KW-1185">Reference proteome</keyword>
<keyword id="KW-0687">Ribonucleoprotein</keyword>
<keyword id="KW-0689">Ribosomal protein</keyword>
<keyword id="KW-0694">RNA-binding</keyword>
<keyword id="KW-0699">rRNA-binding</keyword>
<proteinExistence type="inferred from homology"/>
<reference key="1">
    <citation type="journal article" date="2010" name="J. Bacteriol.">
        <title>The genetic basis of laboratory adaptation in Caulobacter crescentus.</title>
        <authorList>
            <person name="Marks M.E."/>
            <person name="Castro-Rojas C.M."/>
            <person name="Teiling C."/>
            <person name="Du L."/>
            <person name="Kapatral V."/>
            <person name="Walunas T.L."/>
            <person name="Crosson S."/>
        </authorList>
    </citation>
    <scope>NUCLEOTIDE SEQUENCE [LARGE SCALE GENOMIC DNA]</scope>
    <source>
        <strain>NA1000 / CB15N</strain>
    </source>
</reference>
<evidence type="ECO:0000255" key="1">
    <source>
        <dbReference type="HAMAP-Rule" id="MF_01365"/>
    </source>
</evidence>
<evidence type="ECO:0000256" key="2">
    <source>
        <dbReference type="SAM" id="MobiDB-lite"/>
    </source>
</evidence>
<evidence type="ECO:0000305" key="3"/>
<dbReference type="EMBL" id="CP001340">
    <property type="protein sequence ID" value="ACL94786.1"/>
    <property type="molecule type" value="Genomic_DNA"/>
</dbReference>
<dbReference type="RefSeq" id="WP_010919142.1">
    <property type="nucleotide sequence ID" value="NC_011916.1"/>
</dbReference>
<dbReference type="RefSeq" id="YP_002516694.1">
    <property type="nucleotide sequence ID" value="NC_011916.1"/>
</dbReference>
<dbReference type="SMR" id="B8H4E9"/>
<dbReference type="GeneID" id="7333053"/>
<dbReference type="KEGG" id="ccs:CCNA_01321"/>
<dbReference type="PATRIC" id="fig|565050.3.peg.1305"/>
<dbReference type="HOGENOM" id="CLU_065464_1_2_5"/>
<dbReference type="OrthoDB" id="9805007at2"/>
<dbReference type="PhylomeDB" id="B8H4E9"/>
<dbReference type="Proteomes" id="UP000001364">
    <property type="component" value="Chromosome"/>
</dbReference>
<dbReference type="GO" id="GO:0022625">
    <property type="term" value="C:cytosolic large ribosomal subunit"/>
    <property type="evidence" value="ECO:0007669"/>
    <property type="project" value="TreeGrafter"/>
</dbReference>
<dbReference type="GO" id="GO:0019843">
    <property type="term" value="F:rRNA binding"/>
    <property type="evidence" value="ECO:0007669"/>
    <property type="project" value="UniProtKB-UniRule"/>
</dbReference>
<dbReference type="GO" id="GO:0003735">
    <property type="term" value="F:structural constituent of ribosome"/>
    <property type="evidence" value="ECO:0007669"/>
    <property type="project" value="InterPro"/>
</dbReference>
<dbReference type="GO" id="GO:0002181">
    <property type="term" value="P:cytoplasmic translation"/>
    <property type="evidence" value="ECO:0007669"/>
    <property type="project" value="TreeGrafter"/>
</dbReference>
<dbReference type="FunFam" id="3.90.930.12:FF:000001">
    <property type="entry name" value="50S ribosomal protein L6"/>
    <property type="match status" value="1"/>
</dbReference>
<dbReference type="FunFam" id="3.90.930.12:FF:000002">
    <property type="entry name" value="50S ribosomal protein L6"/>
    <property type="match status" value="1"/>
</dbReference>
<dbReference type="Gene3D" id="3.90.930.12">
    <property type="entry name" value="Ribosomal protein L6, alpha-beta domain"/>
    <property type="match status" value="2"/>
</dbReference>
<dbReference type="HAMAP" id="MF_01365_B">
    <property type="entry name" value="Ribosomal_uL6_B"/>
    <property type="match status" value="1"/>
</dbReference>
<dbReference type="InterPro" id="IPR000702">
    <property type="entry name" value="Ribosomal_uL6-like"/>
</dbReference>
<dbReference type="InterPro" id="IPR036789">
    <property type="entry name" value="Ribosomal_uL6-like_a/b-dom_sf"/>
</dbReference>
<dbReference type="InterPro" id="IPR020040">
    <property type="entry name" value="Ribosomal_uL6_a/b-dom"/>
</dbReference>
<dbReference type="InterPro" id="IPR019906">
    <property type="entry name" value="Ribosomal_uL6_bac-type"/>
</dbReference>
<dbReference type="InterPro" id="IPR002358">
    <property type="entry name" value="Ribosomal_uL6_CS"/>
</dbReference>
<dbReference type="NCBIfam" id="TIGR03654">
    <property type="entry name" value="L6_bact"/>
    <property type="match status" value="1"/>
</dbReference>
<dbReference type="PANTHER" id="PTHR11655">
    <property type="entry name" value="60S/50S RIBOSOMAL PROTEIN L6/L9"/>
    <property type="match status" value="1"/>
</dbReference>
<dbReference type="PANTHER" id="PTHR11655:SF14">
    <property type="entry name" value="LARGE RIBOSOMAL SUBUNIT PROTEIN UL6M"/>
    <property type="match status" value="1"/>
</dbReference>
<dbReference type="Pfam" id="PF00347">
    <property type="entry name" value="Ribosomal_L6"/>
    <property type="match status" value="2"/>
</dbReference>
<dbReference type="PIRSF" id="PIRSF002162">
    <property type="entry name" value="Ribosomal_L6"/>
    <property type="match status" value="1"/>
</dbReference>
<dbReference type="PRINTS" id="PR00059">
    <property type="entry name" value="RIBOSOMALL6"/>
</dbReference>
<dbReference type="SUPFAM" id="SSF56053">
    <property type="entry name" value="Ribosomal protein L6"/>
    <property type="match status" value="2"/>
</dbReference>
<dbReference type="PROSITE" id="PS00525">
    <property type="entry name" value="RIBOSOMAL_L6_1"/>
    <property type="match status" value="1"/>
</dbReference>
<sequence length="177" mass="18885">MSRIGKKAVAIPSGVQVTLAGQTVTVKGPKGQLSWTIADEVEVKQEGAELLLAPRVDTKRAKGMWGLSRTLVANMVHGVTVGFEESLELVGVGYRAAMKGTALSLQLGFSHDVDVAAPAGVTFAVPKQTEIKIAGIDKQAVGEIAAKIRRIRPPEPYKGKGVRYAGEKVRRKEGKKK</sequence>
<gene>
    <name evidence="1" type="primary">rplF</name>
    <name type="ordered locus">CCNA_01321</name>
</gene>
<feature type="chain" id="PRO_1000166796" description="Large ribosomal subunit protein uL6">
    <location>
        <begin position="1"/>
        <end position="177"/>
    </location>
</feature>
<feature type="region of interest" description="Disordered" evidence="2">
    <location>
        <begin position="157"/>
        <end position="177"/>
    </location>
</feature>
<comment type="function">
    <text evidence="1">This protein binds to the 23S rRNA, and is important in its secondary structure. It is located near the subunit interface in the base of the L7/L12 stalk, and near the tRNA binding site of the peptidyltransferase center.</text>
</comment>
<comment type="subunit">
    <text evidence="1">Part of the 50S ribosomal subunit.</text>
</comment>
<comment type="similarity">
    <text evidence="1">Belongs to the universal ribosomal protein uL6 family.</text>
</comment>
<protein>
    <recommendedName>
        <fullName evidence="1">Large ribosomal subunit protein uL6</fullName>
    </recommendedName>
    <alternativeName>
        <fullName evidence="3">50S ribosomal protein L6</fullName>
    </alternativeName>
</protein>
<accession>B8H4E9</accession>
<organism>
    <name type="scientific">Caulobacter vibrioides (strain NA1000 / CB15N)</name>
    <name type="common">Caulobacter crescentus</name>
    <dbReference type="NCBI Taxonomy" id="565050"/>
    <lineage>
        <taxon>Bacteria</taxon>
        <taxon>Pseudomonadati</taxon>
        <taxon>Pseudomonadota</taxon>
        <taxon>Alphaproteobacteria</taxon>
        <taxon>Caulobacterales</taxon>
        <taxon>Caulobacteraceae</taxon>
        <taxon>Caulobacter</taxon>
    </lineage>
</organism>
<name>RL6_CAUVN</name>